<organism>
    <name type="scientific">Campylobacter hominis (strain ATCC BAA-381 / DSM 21671 / CCUG 45161 / LMG 19568 / NCTC 13146 / CH001A)</name>
    <dbReference type="NCBI Taxonomy" id="360107"/>
    <lineage>
        <taxon>Bacteria</taxon>
        <taxon>Pseudomonadati</taxon>
        <taxon>Campylobacterota</taxon>
        <taxon>Epsilonproteobacteria</taxon>
        <taxon>Campylobacterales</taxon>
        <taxon>Campylobacteraceae</taxon>
        <taxon>Campylobacter</taxon>
    </lineage>
</organism>
<gene>
    <name evidence="1" type="primary">lepA</name>
    <name type="ordered locus">CHAB381_0767</name>
</gene>
<keyword id="KW-0997">Cell inner membrane</keyword>
<keyword id="KW-1003">Cell membrane</keyword>
<keyword id="KW-0342">GTP-binding</keyword>
<keyword id="KW-0378">Hydrolase</keyword>
<keyword id="KW-0472">Membrane</keyword>
<keyword id="KW-0547">Nucleotide-binding</keyword>
<keyword id="KW-0648">Protein biosynthesis</keyword>
<keyword id="KW-1185">Reference proteome</keyword>
<proteinExistence type="inferred from homology"/>
<dbReference type="EC" id="3.6.5.n1" evidence="1"/>
<dbReference type="EMBL" id="CP000776">
    <property type="protein sequence ID" value="ABS52506.1"/>
    <property type="molecule type" value="Genomic_DNA"/>
</dbReference>
<dbReference type="RefSeq" id="WP_012108629.1">
    <property type="nucleotide sequence ID" value="NC_009714.1"/>
</dbReference>
<dbReference type="SMR" id="A7I1F0"/>
<dbReference type="STRING" id="360107.CHAB381_0767"/>
<dbReference type="KEGG" id="cha:CHAB381_0767"/>
<dbReference type="eggNOG" id="COG0481">
    <property type="taxonomic scope" value="Bacteria"/>
</dbReference>
<dbReference type="HOGENOM" id="CLU_009995_3_3_7"/>
<dbReference type="OrthoDB" id="9801472at2"/>
<dbReference type="Proteomes" id="UP000002407">
    <property type="component" value="Chromosome"/>
</dbReference>
<dbReference type="GO" id="GO:0005886">
    <property type="term" value="C:plasma membrane"/>
    <property type="evidence" value="ECO:0007669"/>
    <property type="project" value="UniProtKB-SubCell"/>
</dbReference>
<dbReference type="GO" id="GO:0005525">
    <property type="term" value="F:GTP binding"/>
    <property type="evidence" value="ECO:0007669"/>
    <property type="project" value="UniProtKB-UniRule"/>
</dbReference>
<dbReference type="GO" id="GO:0003924">
    <property type="term" value="F:GTPase activity"/>
    <property type="evidence" value="ECO:0007669"/>
    <property type="project" value="UniProtKB-UniRule"/>
</dbReference>
<dbReference type="GO" id="GO:0043022">
    <property type="term" value="F:ribosome binding"/>
    <property type="evidence" value="ECO:0007669"/>
    <property type="project" value="UniProtKB-UniRule"/>
</dbReference>
<dbReference type="GO" id="GO:0003746">
    <property type="term" value="F:translation elongation factor activity"/>
    <property type="evidence" value="ECO:0007669"/>
    <property type="project" value="UniProtKB-UniRule"/>
</dbReference>
<dbReference type="GO" id="GO:0045727">
    <property type="term" value="P:positive regulation of translation"/>
    <property type="evidence" value="ECO:0007669"/>
    <property type="project" value="UniProtKB-UniRule"/>
</dbReference>
<dbReference type="CDD" id="cd16260">
    <property type="entry name" value="EF4_III"/>
    <property type="match status" value="1"/>
</dbReference>
<dbReference type="CDD" id="cd01890">
    <property type="entry name" value="LepA"/>
    <property type="match status" value="1"/>
</dbReference>
<dbReference type="CDD" id="cd03709">
    <property type="entry name" value="lepA_C"/>
    <property type="match status" value="1"/>
</dbReference>
<dbReference type="FunFam" id="3.40.50.300:FF:000078">
    <property type="entry name" value="Elongation factor 4"/>
    <property type="match status" value="1"/>
</dbReference>
<dbReference type="FunFam" id="3.30.70.240:FF:000007">
    <property type="entry name" value="Translation factor GUF1, mitochondrial"/>
    <property type="match status" value="1"/>
</dbReference>
<dbReference type="FunFam" id="3.30.70.2570:FF:000001">
    <property type="entry name" value="Translation factor GUF1, mitochondrial"/>
    <property type="match status" value="1"/>
</dbReference>
<dbReference type="FunFam" id="3.30.70.870:FF:000004">
    <property type="entry name" value="Translation factor GUF1, mitochondrial"/>
    <property type="match status" value="1"/>
</dbReference>
<dbReference type="Gene3D" id="3.30.70.240">
    <property type="match status" value="1"/>
</dbReference>
<dbReference type="Gene3D" id="3.30.70.2570">
    <property type="entry name" value="Elongation factor 4, C-terminal domain"/>
    <property type="match status" value="1"/>
</dbReference>
<dbReference type="Gene3D" id="3.30.70.870">
    <property type="entry name" value="Elongation Factor G (Translational Gtpase), domain 3"/>
    <property type="match status" value="1"/>
</dbReference>
<dbReference type="Gene3D" id="3.40.50.300">
    <property type="entry name" value="P-loop containing nucleotide triphosphate hydrolases"/>
    <property type="match status" value="1"/>
</dbReference>
<dbReference type="Gene3D" id="2.40.30.10">
    <property type="entry name" value="Translation factors"/>
    <property type="match status" value="1"/>
</dbReference>
<dbReference type="HAMAP" id="MF_00071">
    <property type="entry name" value="LepA"/>
    <property type="match status" value="1"/>
</dbReference>
<dbReference type="InterPro" id="IPR006297">
    <property type="entry name" value="EF-4"/>
</dbReference>
<dbReference type="InterPro" id="IPR035647">
    <property type="entry name" value="EFG_III/V"/>
</dbReference>
<dbReference type="InterPro" id="IPR000640">
    <property type="entry name" value="EFG_V-like"/>
</dbReference>
<dbReference type="InterPro" id="IPR004161">
    <property type="entry name" value="EFTu-like_2"/>
</dbReference>
<dbReference type="InterPro" id="IPR031157">
    <property type="entry name" value="G_TR_CS"/>
</dbReference>
<dbReference type="InterPro" id="IPR038363">
    <property type="entry name" value="LepA_C_sf"/>
</dbReference>
<dbReference type="InterPro" id="IPR013842">
    <property type="entry name" value="LepA_CTD"/>
</dbReference>
<dbReference type="InterPro" id="IPR035654">
    <property type="entry name" value="LepA_IV"/>
</dbReference>
<dbReference type="InterPro" id="IPR027417">
    <property type="entry name" value="P-loop_NTPase"/>
</dbReference>
<dbReference type="InterPro" id="IPR005225">
    <property type="entry name" value="Small_GTP-bd"/>
</dbReference>
<dbReference type="InterPro" id="IPR000795">
    <property type="entry name" value="T_Tr_GTP-bd_dom"/>
</dbReference>
<dbReference type="NCBIfam" id="TIGR01393">
    <property type="entry name" value="lepA"/>
    <property type="match status" value="1"/>
</dbReference>
<dbReference type="NCBIfam" id="TIGR00231">
    <property type="entry name" value="small_GTP"/>
    <property type="match status" value="1"/>
</dbReference>
<dbReference type="PANTHER" id="PTHR43512:SF4">
    <property type="entry name" value="TRANSLATION FACTOR GUF1 HOMOLOG, CHLOROPLASTIC"/>
    <property type="match status" value="1"/>
</dbReference>
<dbReference type="PANTHER" id="PTHR43512">
    <property type="entry name" value="TRANSLATION FACTOR GUF1-RELATED"/>
    <property type="match status" value="1"/>
</dbReference>
<dbReference type="Pfam" id="PF00679">
    <property type="entry name" value="EFG_C"/>
    <property type="match status" value="1"/>
</dbReference>
<dbReference type="Pfam" id="PF00009">
    <property type="entry name" value="GTP_EFTU"/>
    <property type="match status" value="1"/>
</dbReference>
<dbReference type="Pfam" id="PF03144">
    <property type="entry name" value="GTP_EFTU_D2"/>
    <property type="match status" value="1"/>
</dbReference>
<dbReference type="Pfam" id="PF06421">
    <property type="entry name" value="LepA_C"/>
    <property type="match status" value="1"/>
</dbReference>
<dbReference type="PRINTS" id="PR00315">
    <property type="entry name" value="ELONGATNFCT"/>
</dbReference>
<dbReference type="SUPFAM" id="SSF54980">
    <property type="entry name" value="EF-G C-terminal domain-like"/>
    <property type="match status" value="2"/>
</dbReference>
<dbReference type="SUPFAM" id="SSF52540">
    <property type="entry name" value="P-loop containing nucleoside triphosphate hydrolases"/>
    <property type="match status" value="1"/>
</dbReference>
<dbReference type="PROSITE" id="PS00301">
    <property type="entry name" value="G_TR_1"/>
    <property type="match status" value="1"/>
</dbReference>
<dbReference type="PROSITE" id="PS51722">
    <property type="entry name" value="G_TR_2"/>
    <property type="match status" value="1"/>
</dbReference>
<accession>A7I1F0</accession>
<reference key="1">
    <citation type="submission" date="2007-07" db="EMBL/GenBank/DDBJ databases">
        <title>Complete genome sequence of Campylobacter hominis ATCC BAA-381, a commensal isolated from the human gastrointestinal tract.</title>
        <authorList>
            <person name="Fouts D.E."/>
            <person name="Mongodin E.F."/>
            <person name="Puiu D."/>
            <person name="Sebastian Y."/>
            <person name="Miller W.G."/>
            <person name="Mandrell R.E."/>
            <person name="Nelson K.E."/>
        </authorList>
    </citation>
    <scope>NUCLEOTIDE SEQUENCE [LARGE SCALE GENOMIC DNA]</scope>
    <source>
        <strain>ATCC BAA-381 / DSM 21671 / CCUG 45161 / LMG 19568 / NCTC 13146 / CH001A</strain>
    </source>
</reference>
<name>LEPA_CAMHC</name>
<sequence length="596" mass="66706">MENIRNFSIIAHIDHGKSTLADRLISECNAVEDRQMSSQVMDTMDIERERGITIKAQSVRLEYKMNDKKYILNLIDTPGHVDFSYEVSRSLASCEGAILVVDASQGVQAQTIANVYIAIEHNLEIIPVLNKIDLPNADPDRVKNEIEHIIGIDCTDAIEVSAKTGIGIKDLIEAIIKRIPAPKIEPKKPLKAIIYDSWFDNYLGALALIRVYDGEIHKNDEVFIMGTEKKHIVLDLMYPNPISPIKTEKISSGEIGIVVLGLKNVSDVSVGDTITLSNNKANTPIGGFERAKPFVFAGIYPIETDKFEDLRDALNKLKLNDSSISYEPETSLALGFGFRVGFLGLLHMEVIKERLEREFNLNLIATAPTVTYEIYLTNGEMLKIHNPSELPPISNIQMIKEPYSHATIITPAEFLGNLITLLNSRRGIQTKMDYITSDRVLLEYDIPTNEIIMDFYDKLKSGTKGYASFDYEPIDYKQGDLIKLDIKVAGENVDALSIIVPRDKALQKGRDLVKAMKEIVPRQLFEVAIQASIGNKIIARENVRAMGKNVTAKCYGGDITRKRKLLEKQKEGKKRMKSIGKVNLPSEAFLSVLKID</sequence>
<evidence type="ECO:0000255" key="1">
    <source>
        <dbReference type="HAMAP-Rule" id="MF_00071"/>
    </source>
</evidence>
<feature type="chain" id="PRO_1000031982" description="Elongation factor 4">
    <location>
        <begin position="1"/>
        <end position="596"/>
    </location>
</feature>
<feature type="domain" description="tr-type G">
    <location>
        <begin position="2"/>
        <end position="183"/>
    </location>
</feature>
<feature type="binding site" evidence="1">
    <location>
        <begin position="14"/>
        <end position="19"/>
    </location>
    <ligand>
        <name>GTP</name>
        <dbReference type="ChEBI" id="CHEBI:37565"/>
    </ligand>
</feature>
<feature type="binding site" evidence="1">
    <location>
        <begin position="130"/>
        <end position="133"/>
    </location>
    <ligand>
        <name>GTP</name>
        <dbReference type="ChEBI" id="CHEBI:37565"/>
    </ligand>
</feature>
<protein>
    <recommendedName>
        <fullName evidence="1">Elongation factor 4</fullName>
        <shortName evidence="1">EF-4</shortName>
        <ecNumber evidence="1">3.6.5.n1</ecNumber>
    </recommendedName>
    <alternativeName>
        <fullName evidence="1">Ribosomal back-translocase LepA</fullName>
    </alternativeName>
</protein>
<comment type="function">
    <text evidence="1">Required for accurate and efficient protein synthesis under certain stress conditions. May act as a fidelity factor of the translation reaction, by catalyzing a one-codon backward translocation of tRNAs on improperly translocated ribosomes. Back-translocation proceeds from a post-translocation (POST) complex to a pre-translocation (PRE) complex, thus giving elongation factor G a second chance to translocate the tRNAs correctly. Binds to ribosomes in a GTP-dependent manner.</text>
</comment>
<comment type="catalytic activity">
    <reaction evidence="1">
        <text>GTP + H2O = GDP + phosphate + H(+)</text>
        <dbReference type="Rhea" id="RHEA:19669"/>
        <dbReference type="ChEBI" id="CHEBI:15377"/>
        <dbReference type="ChEBI" id="CHEBI:15378"/>
        <dbReference type="ChEBI" id="CHEBI:37565"/>
        <dbReference type="ChEBI" id="CHEBI:43474"/>
        <dbReference type="ChEBI" id="CHEBI:58189"/>
        <dbReference type="EC" id="3.6.5.n1"/>
    </reaction>
</comment>
<comment type="subcellular location">
    <subcellularLocation>
        <location evidence="1">Cell inner membrane</location>
        <topology evidence="1">Peripheral membrane protein</topology>
        <orientation evidence="1">Cytoplasmic side</orientation>
    </subcellularLocation>
</comment>
<comment type="similarity">
    <text evidence="1">Belongs to the TRAFAC class translation factor GTPase superfamily. Classic translation factor GTPase family. LepA subfamily.</text>
</comment>